<feature type="chain" id="PRO_1000192989" description="Phosphoribosylformylglycinamidine cyclo-ligase">
    <location>
        <begin position="1"/>
        <end position="346"/>
    </location>
</feature>
<gene>
    <name evidence="1" type="primary">purM</name>
    <name type="ordered locus">MADE_1010880</name>
</gene>
<dbReference type="EC" id="6.3.3.1" evidence="1"/>
<dbReference type="EMBL" id="CP001103">
    <property type="protein sequence ID" value="AEA98314.1"/>
    <property type="molecule type" value="Genomic_DNA"/>
</dbReference>
<dbReference type="RefSeq" id="WP_012518637.1">
    <property type="nucleotide sequence ID" value="NC_011138.3"/>
</dbReference>
<dbReference type="SMR" id="B4RZX7"/>
<dbReference type="KEGG" id="amc:MADE_1010880"/>
<dbReference type="HOGENOM" id="CLU_047116_0_0_6"/>
<dbReference type="UniPathway" id="UPA00074">
    <property type="reaction ID" value="UER00129"/>
</dbReference>
<dbReference type="Proteomes" id="UP000001870">
    <property type="component" value="Chromosome"/>
</dbReference>
<dbReference type="GO" id="GO:0005829">
    <property type="term" value="C:cytosol"/>
    <property type="evidence" value="ECO:0007669"/>
    <property type="project" value="TreeGrafter"/>
</dbReference>
<dbReference type="GO" id="GO:0005524">
    <property type="term" value="F:ATP binding"/>
    <property type="evidence" value="ECO:0007669"/>
    <property type="project" value="UniProtKB-KW"/>
</dbReference>
<dbReference type="GO" id="GO:0004637">
    <property type="term" value="F:phosphoribosylamine-glycine ligase activity"/>
    <property type="evidence" value="ECO:0007669"/>
    <property type="project" value="TreeGrafter"/>
</dbReference>
<dbReference type="GO" id="GO:0004641">
    <property type="term" value="F:phosphoribosylformylglycinamidine cyclo-ligase activity"/>
    <property type="evidence" value="ECO:0007669"/>
    <property type="project" value="UniProtKB-UniRule"/>
</dbReference>
<dbReference type="GO" id="GO:0006189">
    <property type="term" value="P:'de novo' IMP biosynthetic process"/>
    <property type="evidence" value="ECO:0007669"/>
    <property type="project" value="UniProtKB-UniRule"/>
</dbReference>
<dbReference type="GO" id="GO:0046084">
    <property type="term" value="P:adenine biosynthetic process"/>
    <property type="evidence" value="ECO:0007669"/>
    <property type="project" value="TreeGrafter"/>
</dbReference>
<dbReference type="CDD" id="cd02196">
    <property type="entry name" value="PurM"/>
    <property type="match status" value="1"/>
</dbReference>
<dbReference type="FunFam" id="3.30.1330.10:FF:000001">
    <property type="entry name" value="Phosphoribosylformylglycinamidine cyclo-ligase"/>
    <property type="match status" value="1"/>
</dbReference>
<dbReference type="FunFam" id="3.90.650.10:FF:000001">
    <property type="entry name" value="Phosphoribosylformylglycinamidine cyclo-ligase"/>
    <property type="match status" value="1"/>
</dbReference>
<dbReference type="Gene3D" id="3.90.650.10">
    <property type="entry name" value="PurM-like C-terminal domain"/>
    <property type="match status" value="1"/>
</dbReference>
<dbReference type="Gene3D" id="3.30.1330.10">
    <property type="entry name" value="PurM-like, N-terminal domain"/>
    <property type="match status" value="1"/>
</dbReference>
<dbReference type="HAMAP" id="MF_00741">
    <property type="entry name" value="AIRS"/>
    <property type="match status" value="1"/>
</dbReference>
<dbReference type="InterPro" id="IPR010918">
    <property type="entry name" value="PurM-like_C_dom"/>
</dbReference>
<dbReference type="InterPro" id="IPR036676">
    <property type="entry name" value="PurM-like_C_sf"/>
</dbReference>
<dbReference type="InterPro" id="IPR016188">
    <property type="entry name" value="PurM-like_N"/>
</dbReference>
<dbReference type="InterPro" id="IPR036921">
    <property type="entry name" value="PurM-like_N_sf"/>
</dbReference>
<dbReference type="InterPro" id="IPR004733">
    <property type="entry name" value="PurM_cligase"/>
</dbReference>
<dbReference type="NCBIfam" id="TIGR00878">
    <property type="entry name" value="purM"/>
    <property type="match status" value="1"/>
</dbReference>
<dbReference type="PANTHER" id="PTHR10520:SF12">
    <property type="entry name" value="TRIFUNCTIONAL PURINE BIOSYNTHETIC PROTEIN ADENOSINE-3"/>
    <property type="match status" value="1"/>
</dbReference>
<dbReference type="PANTHER" id="PTHR10520">
    <property type="entry name" value="TRIFUNCTIONAL PURINE BIOSYNTHETIC PROTEIN ADENOSINE-3-RELATED"/>
    <property type="match status" value="1"/>
</dbReference>
<dbReference type="Pfam" id="PF00586">
    <property type="entry name" value="AIRS"/>
    <property type="match status" value="1"/>
</dbReference>
<dbReference type="Pfam" id="PF02769">
    <property type="entry name" value="AIRS_C"/>
    <property type="match status" value="1"/>
</dbReference>
<dbReference type="SUPFAM" id="SSF56042">
    <property type="entry name" value="PurM C-terminal domain-like"/>
    <property type="match status" value="1"/>
</dbReference>
<dbReference type="SUPFAM" id="SSF55326">
    <property type="entry name" value="PurM N-terminal domain-like"/>
    <property type="match status" value="1"/>
</dbReference>
<protein>
    <recommendedName>
        <fullName evidence="1">Phosphoribosylformylglycinamidine cyclo-ligase</fullName>
        <ecNumber evidence="1">6.3.3.1</ecNumber>
    </recommendedName>
    <alternativeName>
        <fullName evidence="1">AIR synthase</fullName>
    </alternativeName>
    <alternativeName>
        <fullName evidence="1">AIRS</fullName>
    </alternativeName>
    <alternativeName>
        <fullName evidence="1">Phosphoribosyl-aminoimidazole synthetase</fullName>
    </alternativeName>
</protein>
<sequence length="346" mass="37011">MSENKTSLSYKDAGVDIDAGNQLVERIKSVTKKTHRPEVKGNLGGFGALCELPTKYKKPLLVSGTDGVGTKLRVAMDANRHDGVGIDLVAMCVNDLIVQGAEPLFFLDYYATGKLDVDVAASVVTGIGAGCEQAGCALIGGETAEMPGMYHDGDYDIAGFCVGVVEADNVIDGTNVKPGQKLIALGSSGPHSNGYSLVRKIIEVSGADVNAELNGKPIIDQLLEPTRIYVKSVLALLEEVQVSAISHITGGGFWENIPRVLPEDAKVVIDEKSWEWPAVFSWLQENGNVTRHEMYRTFNCGVGLVIVVDDADTEQAVNILKQHGENAWVIGDIASKDGEEQVEINA</sequence>
<keyword id="KW-0067">ATP-binding</keyword>
<keyword id="KW-0963">Cytoplasm</keyword>
<keyword id="KW-0436">Ligase</keyword>
<keyword id="KW-0547">Nucleotide-binding</keyword>
<keyword id="KW-0658">Purine biosynthesis</keyword>
<comment type="catalytic activity">
    <reaction evidence="1">
        <text>2-formamido-N(1)-(5-O-phospho-beta-D-ribosyl)acetamidine + ATP = 5-amino-1-(5-phospho-beta-D-ribosyl)imidazole + ADP + phosphate + H(+)</text>
        <dbReference type="Rhea" id="RHEA:23032"/>
        <dbReference type="ChEBI" id="CHEBI:15378"/>
        <dbReference type="ChEBI" id="CHEBI:30616"/>
        <dbReference type="ChEBI" id="CHEBI:43474"/>
        <dbReference type="ChEBI" id="CHEBI:137981"/>
        <dbReference type="ChEBI" id="CHEBI:147287"/>
        <dbReference type="ChEBI" id="CHEBI:456216"/>
        <dbReference type="EC" id="6.3.3.1"/>
    </reaction>
</comment>
<comment type="pathway">
    <text evidence="1">Purine metabolism; IMP biosynthesis via de novo pathway; 5-amino-1-(5-phospho-D-ribosyl)imidazole from N(2)-formyl-N(1)-(5-phospho-D-ribosyl)glycinamide: step 2/2.</text>
</comment>
<comment type="subcellular location">
    <subcellularLocation>
        <location evidence="1">Cytoplasm</location>
    </subcellularLocation>
</comment>
<comment type="similarity">
    <text evidence="1">Belongs to the AIR synthase family.</text>
</comment>
<reference key="1">
    <citation type="journal article" date="2008" name="ISME J.">
        <title>Comparative genomics of two ecotypes of the marine planktonic copiotroph Alteromonas macleodii suggests alternative lifestyles associated with different kinds of particulate organic matter.</title>
        <authorList>
            <person name="Ivars-Martinez E."/>
            <person name="Martin-Cuadrado A.-B."/>
            <person name="D'Auria G."/>
            <person name="Mira A."/>
            <person name="Ferriera S."/>
            <person name="Johnson J."/>
            <person name="Friedman R."/>
            <person name="Rodriguez-Valera F."/>
        </authorList>
    </citation>
    <scope>NUCLEOTIDE SEQUENCE [LARGE SCALE GENOMIC DNA]</scope>
    <source>
        <strain>DSM 17117 / CIP 110805 / LMG 28347 / Deep ecotype</strain>
    </source>
</reference>
<accession>B4RZX7</accession>
<accession>F2G3E2</accession>
<proteinExistence type="inferred from homology"/>
<name>PUR5_ALTMD</name>
<evidence type="ECO:0000255" key="1">
    <source>
        <dbReference type="HAMAP-Rule" id="MF_00741"/>
    </source>
</evidence>
<organism>
    <name type="scientific">Alteromonas mediterranea (strain DSM 17117 / CIP 110805 / LMG 28347 / Deep ecotype)</name>
    <dbReference type="NCBI Taxonomy" id="1774373"/>
    <lineage>
        <taxon>Bacteria</taxon>
        <taxon>Pseudomonadati</taxon>
        <taxon>Pseudomonadota</taxon>
        <taxon>Gammaproteobacteria</taxon>
        <taxon>Alteromonadales</taxon>
        <taxon>Alteromonadaceae</taxon>
        <taxon>Alteromonas/Salinimonas group</taxon>
        <taxon>Alteromonas</taxon>
    </lineage>
</organism>